<gene>
    <name evidence="1" type="primary">ftsH</name>
    <name type="ordered locus">Cphy_2049</name>
</gene>
<feature type="chain" id="PRO_5000295994" description="ATP-dependent zinc metalloprotease FtsH">
    <location>
        <begin position="1"/>
        <end position="577"/>
    </location>
</feature>
<feature type="topological domain" description="Cytoplasmic" evidence="1">
    <location>
        <begin position="1"/>
        <end position="3"/>
    </location>
</feature>
<feature type="transmembrane region" description="Helical" evidence="1">
    <location>
        <begin position="4"/>
        <end position="24"/>
    </location>
</feature>
<feature type="topological domain" description="Extracellular" evidence="1">
    <location>
        <begin position="25"/>
        <end position="98"/>
    </location>
</feature>
<feature type="transmembrane region" description="Helical" evidence="1">
    <location>
        <begin position="99"/>
        <end position="119"/>
    </location>
</feature>
<feature type="topological domain" description="Cytoplasmic" evidence="1">
    <location>
        <begin position="120"/>
        <end position="577"/>
    </location>
</feature>
<feature type="active site" evidence="1">
    <location>
        <position position="410"/>
    </location>
</feature>
<feature type="binding site" evidence="1">
    <location>
        <begin position="186"/>
        <end position="193"/>
    </location>
    <ligand>
        <name>ATP</name>
        <dbReference type="ChEBI" id="CHEBI:30616"/>
    </ligand>
</feature>
<feature type="binding site" evidence="1">
    <location>
        <position position="409"/>
    </location>
    <ligand>
        <name>Zn(2+)</name>
        <dbReference type="ChEBI" id="CHEBI:29105"/>
        <note>catalytic</note>
    </ligand>
</feature>
<feature type="binding site" evidence="1">
    <location>
        <position position="413"/>
    </location>
    <ligand>
        <name>Zn(2+)</name>
        <dbReference type="ChEBI" id="CHEBI:29105"/>
        <note>catalytic</note>
    </ligand>
</feature>
<feature type="binding site" evidence="1">
    <location>
        <position position="487"/>
    </location>
    <ligand>
        <name>Zn(2+)</name>
        <dbReference type="ChEBI" id="CHEBI:29105"/>
        <note>catalytic</note>
    </ligand>
</feature>
<name>FTSH_LACP7</name>
<keyword id="KW-0067">ATP-binding</keyword>
<keyword id="KW-1003">Cell membrane</keyword>
<keyword id="KW-0378">Hydrolase</keyword>
<keyword id="KW-0472">Membrane</keyword>
<keyword id="KW-0479">Metal-binding</keyword>
<keyword id="KW-0482">Metalloprotease</keyword>
<keyword id="KW-0547">Nucleotide-binding</keyword>
<keyword id="KW-0645">Protease</keyword>
<keyword id="KW-1185">Reference proteome</keyword>
<keyword id="KW-0812">Transmembrane</keyword>
<keyword id="KW-1133">Transmembrane helix</keyword>
<keyword id="KW-0862">Zinc</keyword>
<comment type="function">
    <text evidence="1">Acts as a processive, ATP-dependent zinc metallopeptidase for both cytoplasmic and membrane proteins. Plays a role in the quality control of integral membrane proteins.</text>
</comment>
<comment type="cofactor">
    <cofactor evidence="1">
        <name>Zn(2+)</name>
        <dbReference type="ChEBI" id="CHEBI:29105"/>
    </cofactor>
    <text evidence="1">Binds 1 zinc ion per subunit.</text>
</comment>
<comment type="subunit">
    <text evidence="1">Homohexamer.</text>
</comment>
<comment type="subcellular location">
    <subcellularLocation>
        <location evidence="1">Cell membrane</location>
        <topology evidence="1">Multi-pass membrane protein</topology>
        <orientation evidence="1">Cytoplasmic side</orientation>
    </subcellularLocation>
</comment>
<comment type="similarity">
    <text evidence="1">In the central section; belongs to the AAA ATPase family.</text>
</comment>
<comment type="similarity">
    <text evidence="1">In the C-terminal section; belongs to the peptidase M41 family.</text>
</comment>
<organism>
    <name type="scientific">Lachnoclostridium phytofermentans (strain ATCC 700394 / DSM 18823 / ISDg)</name>
    <name type="common">Clostridium phytofermentans</name>
    <dbReference type="NCBI Taxonomy" id="357809"/>
    <lineage>
        <taxon>Bacteria</taxon>
        <taxon>Bacillati</taxon>
        <taxon>Bacillota</taxon>
        <taxon>Clostridia</taxon>
        <taxon>Lachnospirales</taxon>
        <taxon>Lachnospiraceae</taxon>
    </lineage>
</organism>
<accession>A9KIG5</accession>
<evidence type="ECO:0000255" key="1">
    <source>
        <dbReference type="HAMAP-Rule" id="MF_01458"/>
    </source>
</evidence>
<proteinExistence type="inferred from homology"/>
<protein>
    <recommendedName>
        <fullName evidence="1">ATP-dependent zinc metalloprotease FtsH</fullName>
        <ecNumber evidence="1">3.4.24.-</ecNumber>
    </recommendedName>
</protein>
<dbReference type="EC" id="3.4.24.-" evidence="1"/>
<dbReference type="EMBL" id="CP000885">
    <property type="protein sequence ID" value="ABX42417.1"/>
    <property type="molecule type" value="Genomic_DNA"/>
</dbReference>
<dbReference type="RefSeq" id="WP_012200071.1">
    <property type="nucleotide sequence ID" value="NC_010001.1"/>
</dbReference>
<dbReference type="SMR" id="A9KIG5"/>
<dbReference type="STRING" id="357809.Cphy_2049"/>
<dbReference type="KEGG" id="cpy:Cphy_2049"/>
<dbReference type="eggNOG" id="COG0465">
    <property type="taxonomic scope" value="Bacteria"/>
</dbReference>
<dbReference type="HOGENOM" id="CLU_000688_16_2_9"/>
<dbReference type="OrthoDB" id="9809379at2"/>
<dbReference type="Proteomes" id="UP000000370">
    <property type="component" value="Chromosome"/>
</dbReference>
<dbReference type="GO" id="GO:0005886">
    <property type="term" value="C:plasma membrane"/>
    <property type="evidence" value="ECO:0007669"/>
    <property type="project" value="UniProtKB-SubCell"/>
</dbReference>
<dbReference type="GO" id="GO:0005524">
    <property type="term" value="F:ATP binding"/>
    <property type="evidence" value="ECO:0007669"/>
    <property type="project" value="UniProtKB-UniRule"/>
</dbReference>
<dbReference type="GO" id="GO:0016887">
    <property type="term" value="F:ATP hydrolysis activity"/>
    <property type="evidence" value="ECO:0007669"/>
    <property type="project" value="UniProtKB-UniRule"/>
</dbReference>
<dbReference type="GO" id="GO:0004176">
    <property type="term" value="F:ATP-dependent peptidase activity"/>
    <property type="evidence" value="ECO:0007669"/>
    <property type="project" value="InterPro"/>
</dbReference>
<dbReference type="GO" id="GO:0004222">
    <property type="term" value="F:metalloendopeptidase activity"/>
    <property type="evidence" value="ECO:0007669"/>
    <property type="project" value="InterPro"/>
</dbReference>
<dbReference type="GO" id="GO:0008270">
    <property type="term" value="F:zinc ion binding"/>
    <property type="evidence" value="ECO:0007669"/>
    <property type="project" value="UniProtKB-UniRule"/>
</dbReference>
<dbReference type="GO" id="GO:0030163">
    <property type="term" value="P:protein catabolic process"/>
    <property type="evidence" value="ECO:0007669"/>
    <property type="project" value="UniProtKB-UniRule"/>
</dbReference>
<dbReference type="GO" id="GO:0006508">
    <property type="term" value="P:proteolysis"/>
    <property type="evidence" value="ECO:0007669"/>
    <property type="project" value="UniProtKB-KW"/>
</dbReference>
<dbReference type="CDD" id="cd19501">
    <property type="entry name" value="RecA-like_FtsH"/>
    <property type="match status" value="1"/>
</dbReference>
<dbReference type="FunFam" id="1.10.8.60:FF:000001">
    <property type="entry name" value="ATP-dependent zinc metalloprotease FtsH"/>
    <property type="match status" value="1"/>
</dbReference>
<dbReference type="FunFam" id="3.40.50.300:FF:000001">
    <property type="entry name" value="ATP-dependent zinc metalloprotease FtsH"/>
    <property type="match status" value="1"/>
</dbReference>
<dbReference type="Gene3D" id="1.10.8.60">
    <property type="match status" value="1"/>
</dbReference>
<dbReference type="Gene3D" id="3.40.50.300">
    <property type="entry name" value="P-loop containing nucleotide triphosphate hydrolases"/>
    <property type="match status" value="1"/>
</dbReference>
<dbReference type="Gene3D" id="1.20.58.760">
    <property type="entry name" value="Peptidase M41"/>
    <property type="match status" value="1"/>
</dbReference>
<dbReference type="HAMAP" id="MF_01458">
    <property type="entry name" value="FtsH"/>
    <property type="match status" value="1"/>
</dbReference>
<dbReference type="InterPro" id="IPR003593">
    <property type="entry name" value="AAA+_ATPase"/>
</dbReference>
<dbReference type="InterPro" id="IPR041569">
    <property type="entry name" value="AAA_lid_3"/>
</dbReference>
<dbReference type="InterPro" id="IPR003959">
    <property type="entry name" value="ATPase_AAA_core"/>
</dbReference>
<dbReference type="InterPro" id="IPR003960">
    <property type="entry name" value="ATPase_AAA_CS"/>
</dbReference>
<dbReference type="InterPro" id="IPR005936">
    <property type="entry name" value="FtsH"/>
</dbReference>
<dbReference type="InterPro" id="IPR027417">
    <property type="entry name" value="P-loop_NTPase"/>
</dbReference>
<dbReference type="InterPro" id="IPR011546">
    <property type="entry name" value="Pept_M41_FtsH_extracell"/>
</dbReference>
<dbReference type="InterPro" id="IPR000642">
    <property type="entry name" value="Peptidase_M41"/>
</dbReference>
<dbReference type="InterPro" id="IPR037219">
    <property type="entry name" value="Peptidase_M41-like"/>
</dbReference>
<dbReference type="PANTHER" id="PTHR23076:SF113">
    <property type="entry name" value="ATP-DEPENDENT ZINC METALLOPROTEASE FTSH 1, CHLOROPLASTIC-RELATED"/>
    <property type="match status" value="1"/>
</dbReference>
<dbReference type="PANTHER" id="PTHR23076">
    <property type="entry name" value="METALLOPROTEASE M41 FTSH"/>
    <property type="match status" value="1"/>
</dbReference>
<dbReference type="Pfam" id="PF00004">
    <property type="entry name" value="AAA"/>
    <property type="match status" value="1"/>
</dbReference>
<dbReference type="Pfam" id="PF17862">
    <property type="entry name" value="AAA_lid_3"/>
    <property type="match status" value="1"/>
</dbReference>
<dbReference type="Pfam" id="PF06480">
    <property type="entry name" value="FtsH_ext"/>
    <property type="match status" value="1"/>
</dbReference>
<dbReference type="Pfam" id="PF01434">
    <property type="entry name" value="Peptidase_M41"/>
    <property type="match status" value="1"/>
</dbReference>
<dbReference type="SMART" id="SM00382">
    <property type="entry name" value="AAA"/>
    <property type="match status" value="1"/>
</dbReference>
<dbReference type="SUPFAM" id="SSF140990">
    <property type="entry name" value="FtsH protease domain-like"/>
    <property type="match status" value="1"/>
</dbReference>
<dbReference type="SUPFAM" id="SSF52540">
    <property type="entry name" value="P-loop containing nucleoside triphosphate hydrolases"/>
    <property type="match status" value="1"/>
</dbReference>
<dbReference type="PROSITE" id="PS00674">
    <property type="entry name" value="AAA"/>
    <property type="match status" value="1"/>
</dbReference>
<sequence length="577" mass="63635">MKKLYWIILIAVVLACSGILMSLHLSVTKEEMTYPSFLDAVNQNQVASVQFKENDSTLKVILNSDKDTTYIVPNPKTENFTEFLLLRNIKVDNSDSYSATKVIQIILIITVGTGVFLFIRTSGGKDKPLMKDAAKNKKAENRVKLGDVAGNAEAKSMVGDIIDFIKEPEKYSALGARMPKGVMLYGPPGTGKTLIAKAIATEAGVPFYAMSGSDFVQMYVGVGASRIRTLFNKAKKSEKAVIFIDEIDAIGKKRARSTSASNDERDQTLNALLTEMSGFHENKGIVVIGATNRLDTLDEALLRPGRFDRQIEVGLPDILARKKILKLYGDKKPLGDDVDLEVLAKNTVSFSGAMLENLLNEAAIQAANEKSSYIQSSHVDKAFYTVIAGSPLQDRSFISEKDKSITAYHEAGHALATKLLQPEQYISKVTIIPSVKGAGGFNLSIPKDSLYQSKRQILCSIQILLAGRVAEELIFGEEEITTGASNDIQKASAMLVDYLNKYGMDDEMGLFSTVVLEDQYDTDFLNKCRNQMHALYDTTKKLMTENKKLLIEITNELLEKESLKGEDIDRICLKEAV</sequence>
<reference key="1">
    <citation type="submission" date="2007-11" db="EMBL/GenBank/DDBJ databases">
        <title>Complete genome sequence of Clostridium phytofermentans ISDg.</title>
        <authorList>
            <person name="Leschine S.B."/>
            <person name="Warnick T.A."/>
            <person name="Blanchard J.L."/>
            <person name="Schnell D.J."/>
            <person name="Petit E.L."/>
            <person name="LaTouf W.G."/>
            <person name="Copeland A."/>
            <person name="Lucas S."/>
            <person name="Lapidus A."/>
            <person name="Barry K."/>
            <person name="Glavina del Rio T."/>
            <person name="Dalin E."/>
            <person name="Tice H."/>
            <person name="Pitluck S."/>
            <person name="Kiss H."/>
            <person name="Brettin T."/>
            <person name="Bruce D."/>
            <person name="Detter J.C."/>
            <person name="Han C."/>
            <person name="Kuske C."/>
            <person name="Schmutz J."/>
            <person name="Larimer F."/>
            <person name="Land M."/>
            <person name="Hauser L."/>
            <person name="Kyrpides N."/>
            <person name="Kim E.A."/>
            <person name="Richardson P."/>
        </authorList>
    </citation>
    <scope>NUCLEOTIDE SEQUENCE [LARGE SCALE GENOMIC DNA]</scope>
    <source>
        <strain>ATCC 700394 / DSM 18823 / ISDg</strain>
    </source>
</reference>